<evidence type="ECO:0000255" key="1">
    <source>
        <dbReference type="HAMAP-Rule" id="MF_01810"/>
    </source>
</evidence>
<comment type="function">
    <text evidence="1">Required for the insertion and/or proper folding and/or complex formation of integral membrane proteins into the membrane. Involved in integration of membrane proteins that insert both dependently and independently of the Sec translocase complex, as well as at least some lipoproteins. Aids folding of multispanning membrane proteins.</text>
</comment>
<comment type="subunit">
    <text evidence="1">Interacts with the Sec translocase complex via SecD. Specifically interacts with transmembrane segments of nascent integral membrane proteins during membrane integration.</text>
</comment>
<comment type="subcellular location">
    <subcellularLocation>
        <location evidence="1">Cell inner membrane</location>
        <topology evidence="1">Multi-pass membrane protein</topology>
    </subcellularLocation>
</comment>
<comment type="similarity">
    <text evidence="1">Belongs to the OXA1/ALB3/YidC family. Type 1 subfamily.</text>
</comment>
<gene>
    <name evidence="1" type="primary">yidC</name>
    <name type="ordered locus">Gbem_4059</name>
</gene>
<dbReference type="EMBL" id="CP001124">
    <property type="protein sequence ID" value="ACH41049.1"/>
    <property type="molecule type" value="Genomic_DNA"/>
</dbReference>
<dbReference type="RefSeq" id="WP_012532486.1">
    <property type="nucleotide sequence ID" value="NC_011146.1"/>
</dbReference>
<dbReference type="SMR" id="B5EGX9"/>
<dbReference type="STRING" id="404380.Gbem_4059"/>
<dbReference type="KEGG" id="gbm:Gbem_4059"/>
<dbReference type="eggNOG" id="COG0706">
    <property type="taxonomic scope" value="Bacteria"/>
</dbReference>
<dbReference type="HOGENOM" id="CLU_016535_3_0_7"/>
<dbReference type="OrthoDB" id="9780552at2"/>
<dbReference type="Proteomes" id="UP000008825">
    <property type="component" value="Chromosome"/>
</dbReference>
<dbReference type="GO" id="GO:0005886">
    <property type="term" value="C:plasma membrane"/>
    <property type="evidence" value="ECO:0007669"/>
    <property type="project" value="UniProtKB-SubCell"/>
</dbReference>
<dbReference type="GO" id="GO:0032977">
    <property type="term" value="F:membrane insertase activity"/>
    <property type="evidence" value="ECO:0007669"/>
    <property type="project" value="InterPro"/>
</dbReference>
<dbReference type="GO" id="GO:0051205">
    <property type="term" value="P:protein insertion into membrane"/>
    <property type="evidence" value="ECO:0007669"/>
    <property type="project" value="TreeGrafter"/>
</dbReference>
<dbReference type="GO" id="GO:0015031">
    <property type="term" value="P:protein transport"/>
    <property type="evidence" value="ECO:0007669"/>
    <property type="project" value="UniProtKB-KW"/>
</dbReference>
<dbReference type="CDD" id="cd20070">
    <property type="entry name" value="5TM_YidC_Alb3"/>
    <property type="match status" value="1"/>
</dbReference>
<dbReference type="CDD" id="cd19961">
    <property type="entry name" value="EcYidC-like_peri"/>
    <property type="match status" value="1"/>
</dbReference>
<dbReference type="Gene3D" id="2.70.98.90">
    <property type="match status" value="1"/>
</dbReference>
<dbReference type="HAMAP" id="MF_01810">
    <property type="entry name" value="YidC_type1"/>
    <property type="match status" value="1"/>
</dbReference>
<dbReference type="InterPro" id="IPR019998">
    <property type="entry name" value="Membr_insert_YidC"/>
</dbReference>
<dbReference type="InterPro" id="IPR028053">
    <property type="entry name" value="Membr_insert_YidC_N"/>
</dbReference>
<dbReference type="InterPro" id="IPR001708">
    <property type="entry name" value="YidC/ALB3/OXA1/COX18"/>
</dbReference>
<dbReference type="InterPro" id="IPR028055">
    <property type="entry name" value="YidC/Oxa/ALB_C"/>
</dbReference>
<dbReference type="InterPro" id="IPR047196">
    <property type="entry name" value="YidC_ALB_C"/>
</dbReference>
<dbReference type="InterPro" id="IPR038221">
    <property type="entry name" value="YidC_periplasmic_sf"/>
</dbReference>
<dbReference type="NCBIfam" id="NF002352">
    <property type="entry name" value="PRK01318.1-3"/>
    <property type="match status" value="1"/>
</dbReference>
<dbReference type="NCBIfam" id="NF002353">
    <property type="entry name" value="PRK01318.1-4"/>
    <property type="match status" value="1"/>
</dbReference>
<dbReference type="NCBIfam" id="TIGR03593">
    <property type="entry name" value="yidC_nterm"/>
    <property type="match status" value="1"/>
</dbReference>
<dbReference type="NCBIfam" id="TIGR03592">
    <property type="entry name" value="yidC_oxa1_cterm"/>
    <property type="match status" value="1"/>
</dbReference>
<dbReference type="PANTHER" id="PTHR12428:SF65">
    <property type="entry name" value="CYTOCHROME C OXIDASE ASSEMBLY PROTEIN COX18, MITOCHONDRIAL"/>
    <property type="match status" value="1"/>
</dbReference>
<dbReference type="PANTHER" id="PTHR12428">
    <property type="entry name" value="OXA1"/>
    <property type="match status" value="1"/>
</dbReference>
<dbReference type="Pfam" id="PF02096">
    <property type="entry name" value="60KD_IMP"/>
    <property type="match status" value="1"/>
</dbReference>
<dbReference type="Pfam" id="PF14849">
    <property type="entry name" value="YidC_periplas"/>
    <property type="match status" value="1"/>
</dbReference>
<dbReference type="PRINTS" id="PR00701">
    <property type="entry name" value="60KDINNERMP"/>
</dbReference>
<dbReference type="PRINTS" id="PR01900">
    <property type="entry name" value="YIDCPROTEIN"/>
</dbReference>
<proteinExistence type="inferred from homology"/>
<keyword id="KW-0997">Cell inner membrane</keyword>
<keyword id="KW-1003">Cell membrane</keyword>
<keyword id="KW-0143">Chaperone</keyword>
<keyword id="KW-0472">Membrane</keyword>
<keyword id="KW-0653">Protein transport</keyword>
<keyword id="KW-1185">Reference proteome</keyword>
<keyword id="KW-0812">Transmembrane</keyword>
<keyword id="KW-1133">Transmembrane helix</keyword>
<keyword id="KW-0813">Transport</keyword>
<protein>
    <recommendedName>
        <fullName evidence="1">Membrane protein insertase YidC</fullName>
    </recommendedName>
    <alternativeName>
        <fullName evidence="1">Foldase YidC</fullName>
    </alternativeName>
    <alternativeName>
        <fullName evidence="1">Membrane integrase YidC</fullName>
    </alternativeName>
    <alternativeName>
        <fullName evidence="1">Membrane protein YidC</fullName>
    </alternativeName>
</protein>
<organism>
    <name type="scientific">Citrifermentans bemidjiense (strain ATCC BAA-1014 / DSM 16622 / JCM 12645 / Bem)</name>
    <name type="common">Geobacter bemidjiensis</name>
    <dbReference type="NCBI Taxonomy" id="404380"/>
    <lineage>
        <taxon>Bacteria</taxon>
        <taxon>Pseudomonadati</taxon>
        <taxon>Thermodesulfobacteriota</taxon>
        <taxon>Desulfuromonadia</taxon>
        <taxon>Geobacterales</taxon>
        <taxon>Geobacteraceae</taxon>
        <taxon>Citrifermentans</taxon>
    </lineage>
</organism>
<name>YIDC_CITBB</name>
<reference key="1">
    <citation type="submission" date="2008-07" db="EMBL/GenBank/DDBJ databases">
        <title>Complete sequence of Geobacter bemidjiensis BEM.</title>
        <authorList>
            <consortium name="US DOE Joint Genome Institute"/>
            <person name="Lucas S."/>
            <person name="Copeland A."/>
            <person name="Lapidus A."/>
            <person name="Glavina del Rio T."/>
            <person name="Dalin E."/>
            <person name="Tice H."/>
            <person name="Bruce D."/>
            <person name="Goodwin L."/>
            <person name="Pitluck S."/>
            <person name="Kiss H."/>
            <person name="Brettin T."/>
            <person name="Detter J.C."/>
            <person name="Han C."/>
            <person name="Kuske C.R."/>
            <person name="Schmutz J."/>
            <person name="Larimer F."/>
            <person name="Land M."/>
            <person name="Hauser L."/>
            <person name="Kyrpides N."/>
            <person name="Lykidis A."/>
            <person name="Lovley D."/>
            <person name="Richardson P."/>
        </authorList>
    </citation>
    <scope>NUCLEOTIDE SEQUENCE [LARGE SCALE GENOMIC DNA]</scope>
    <source>
        <strain>ATCC BAA-1014 / DSM 16622 / JCM 12645 / Bem</strain>
    </source>
</reference>
<accession>B5EGX9</accession>
<sequence length="537" mass="59106">MEKRLIIAVLLSIGVLYAYSFIFPTPKPLTAPGAKQAAMSSASAPALPAAVAPTAGTAPLAAPAPQAGQAPAVAKDVTVDTDLYTAVFSTQGGGLKKFVLKKYKETVGPQGKDIVLVNETAANRYALLSDSREFGLSPDALYSASTGEVKVTNGGKGSLEFTTTTSQGITFRKVYTFSGDAYRIGLTEEVQNAGNVALTGAVHLLQTSRVVEAKKEGRYEVHAPSTLSEGKVKVDKLDNLLKNPVQYGKDIAWSAFADKYFMDGIIADKGSISQVRITRPANDAIQRDIVSPTVTVAPGQRSAVNYAVYYGPKDLDILKLQGNRLDEVIDYGWFGPIAKPLVHSLKFLYKYTGNYGIAIIIITFILKLVFFPLTHKSYKSMKDMQKLQPKMTELKEKFKNDRDAMNRAVMELYKTHKVNPLGGCLPMVVQIPVFFGLYRALMYSIELRHAPFYLWITDLSAKDPYYVTPIIMGVTMFIQQKMTPTNMDPVQAKMMLMLPIVFTFMFLNFPSGLVIYWLVNNVLTIAQQMYINKAVAD</sequence>
<feature type="chain" id="PRO_1000187669" description="Membrane protein insertase YidC">
    <location>
        <begin position="1"/>
        <end position="537"/>
    </location>
</feature>
<feature type="transmembrane region" description="Helical" evidence="1">
    <location>
        <begin position="5"/>
        <end position="25"/>
    </location>
</feature>
<feature type="transmembrane region" description="Helical" evidence="1">
    <location>
        <begin position="353"/>
        <end position="373"/>
    </location>
</feature>
<feature type="transmembrane region" description="Helical" evidence="1">
    <location>
        <begin position="418"/>
        <end position="438"/>
    </location>
</feature>
<feature type="transmembrane region" description="Helical" evidence="1">
    <location>
        <begin position="495"/>
        <end position="515"/>
    </location>
</feature>